<reference key="1">
    <citation type="submission" date="2004-11" db="EMBL/GenBank/DDBJ databases">
        <title>Complete genome sequence of Thermus thermophilus HB8.</title>
        <authorList>
            <person name="Masui R."/>
            <person name="Kurokawa K."/>
            <person name="Nakagawa N."/>
            <person name="Tokunaga F."/>
            <person name="Koyama Y."/>
            <person name="Shibata T."/>
            <person name="Oshima T."/>
            <person name="Yokoyama S."/>
            <person name="Yasunaga T."/>
            <person name="Kuramitsu S."/>
        </authorList>
    </citation>
    <scope>NUCLEOTIDE SEQUENCE [LARGE SCALE GENOMIC DNA]</scope>
    <source>
        <strain>ATCC 27634 / DSM 579 / HB8</strain>
    </source>
</reference>
<sequence>MKGMRGRLFVMTGASGVGKGTVRAKVLERTRLFYSISMTTRPPRPGEVDGVDYYFVDRPTFEALVREDGFLEYAEYVGHLYGTPRAPVERALSRGEDVLLEIEVQGALQVKRAVPEAVLIFLLPPSLSELKRRLVYRGKDSPEKIQKRLEQAEWEIRNAHLFDYVVVNDVLEEAVADFLAILTAERRRSGRMGEALEMALRRDLALEAELDEILRRRYGGTGH</sequence>
<organism>
    <name type="scientific">Thermus thermophilus (strain ATCC 27634 / DSM 579 / HB8)</name>
    <dbReference type="NCBI Taxonomy" id="300852"/>
    <lineage>
        <taxon>Bacteria</taxon>
        <taxon>Thermotogati</taxon>
        <taxon>Deinococcota</taxon>
        <taxon>Deinococci</taxon>
        <taxon>Thermales</taxon>
        <taxon>Thermaceae</taxon>
        <taxon>Thermus</taxon>
    </lineage>
</organism>
<accession>Q5SI18</accession>
<gene>
    <name evidence="1" type="primary">gmk</name>
    <name type="ordered locus">TTHA1562</name>
</gene>
<evidence type="ECO:0000255" key="1">
    <source>
        <dbReference type="HAMAP-Rule" id="MF_00328"/>
    </source>
</evidence>
<keyword id="KW-0067">ATP-binding</keyword>
<keyword id="KW-0963">Cytoplasm</keyword>
<keyword id="KW-0418">Kinase</keyword>
<keyword id="KW-0547">Nucleotide-binding</keyword>
<keyword id="KW-1185">Reference proteome</keyword>
<keyword id="KW-0808">Transferase</keyword>
<proteinExistence type="inferred from homology"/>
<feature type="chain" id="PRO_0000266428" description="Guanylate kinase">
    <location>
        <begin position="1"/>
        <end position="223"/>
    </location>
</feature>
<feature type="domain" description="Guanylate kinase-like" evidence="1">
    <location>
        <begin position="6"/>
        <end position="183"/>
    </location>
</feature>
<feature type="binding site" evidence="1">
    <location>
        <begin position="13"/>
        <end position="20"/>
    </location>
    <ligand>
        <name>ATP</name>
        <dbReference type="ChEBI" id="CHEBI:30616"/>
    </ligand>
</feature>
<comment type="function">
    <text evidence="1">Essential for recycling GMP and indirectly, cGMP.</text>
</comment>
<comment type="catalytic activity">
    <reaction evidence="1">
        <text>GMP + ATP = GDP + ADP</text>
        <dbReference type="Rhea" id="RHEA:20780"/>
        <dbReference type="ChEBI" id="CHEBI:30616"/>
        <dbReference type="ChEBI" id="CHEBI:58115"/>
        <dbReference type="ChEBI" id="CHEBI:58189"/>
        <dbReference type="ChEBI" id="CHEBI:456216"/>
        <dbReference type="EC" id="2.7.4.8"/>
    </reaction>
</comment>
<comment type="subcellular location">
    <subcellularLocation>
        <location evidence="1">Cytoplasm</location>
    </subcellularLocation>
</comment>
<comment type="similarity">
    <text evidence="1">Belongs to the guanylate kinase family.</text>
</comment>
<name>KGUA_THET8</name>
<dbReference type="EC" id="2.7.4.8" evidence="1"/>
<dbReference type="EMBL" id="AP008226">
    <property type="protein sequence ID" value="BAD71385.1"/>
    <property type="molecule type" value="Genomic_DNA"/>
</dbReference>
<dbReference type="RefSeq" id="YP_144828.1">
    <property type="nucleotide sequence ID" value="NC_006461.1"/>
</dbReference>
<dbReference type="SMR" id="Q5SI18"/>
<dbReference type="EnsemblBacteria" id="BAD71385">
    <property type="protein sequence ID" value="BAD71385"/>
    <property type="gene ID" value="BAD71385"/>
</dbReference>
<dbReference type="KEGG" id="ttj:TTHA1562"/>
<dbReference type="PATRIC" id="fig|300852.9.peg.1533"/>
<dbReference type="eggNOG" id="COG0194">
    <property type="taxonomic scope" value="Bacteria"/>
</dbReference>
<dbReference type="HOGENOM" id="CLU_001715_1_2_0"/>
<dbReference type="PhylomeDB" id="Q5SI18"/>
<dbReference type="Proteomes" id="UP000000532">
    <property type="component" value="Chromosome"/>
</dbReference>
<dbReference type="GO" id="GO:0005829">
    <property type="term" value="C:cytosol"/>
    <property type="evidence" value="ECO:0007669"/>
    <property type="project" value="TreeGrafter"/>
</dbReference>
<dbReference type="GO" id="GO:0005524">
    <property type="term" value="F:ATP binding"/>
    <property type="evidence" value="ECO:0007669"/>
    <property type="project" value="UniProtKB-UniRule"/>
</dbReference>
<dbReference type="GO" id="GO:0004385">
    <property type="term" value="F:guanylate kinase activity"/>
    <property type="evidence" value="ECO:0007669"/>
    <property type="project" value="UniProtKB-UniRule"/>
</dbReference>
<dbReference type="CDD" id="cd00071">
    <property type="entry name" value="GMPK"/>
    <property type="match status" value="1"/>
</dbReference>
<dbReference type="FunFam" id="3.40.50.300:FF:000855">
    <property type="entry name" value="Guanylate kinase"/>
    <property type="match status" value="1"/>
</dbReference>
<dbReference type="FunFam" id="3.30.63.10:FF:000002">
    <property type="entry name" value="Guanylate kinase 1"/>
    <property type="match status" value="1"/>
</dbReference>
<dbReference type="Gene3D" id="3.30.63.10">
    <property type="entry name" value="Guanylate Kinase phosphate binding domain"/>
    <property type="match status" value="1"/>
</dbReference>
<dbReference type="Gene3D" id="3.40.50.300">
    <property type="entry name" value="P-loop containing nucleotide triphosphate hydrolases"/>
    <property type="match status" value="1"/>
</dbReference>
<dbReference type="HAMAP" id="MF_00328">
    <property type="entry name" value="Guanylate_kinase"/>
    <property type="match status" value="1"/>
</dbReference>
<dbReference type="InterPro" id="IPR008145">
    <property type="entry name" value="GK/Ca_channel_bsu"/>
</dbReference>
<dbReference type="InterPro" id="IPR008144">
    <property type="entry name" value="Guanylate_kin-like_dom"/>
</dbReference>
<dbReference type="InterPro" id="IPR017665">
    <property type="entry name" value="Guanylate_kinase"/>
</dbReference>
<dbReference type="InterPro" id="IPR020590">
    <property type="entry name" value="Guanylate_kinase_CS"/>
</dbReference>
<dbReference type="InterPro" id="IPR027417">
    <property type="entry name" value="P-loop_NTPase"/>
</dbReference>
<dbReference type="NCBIfam" id="TIGR03263">
    <property type="entry name" value="guanyl_kin"/>
    <property type="match status" value="1"/>
</dbReference>
<dbReference type="PANTHER" id="PTHR23117:SF13">
    <property type="entry name" value="GUANYLATE KINASE"/>
    <property type="match status" value="1"/>
</dbReference>
<dbReference type="PANTHER" id="PTHR23117">
    <property type="entry name" value="GUANYLATE KINASE-RELATED"/>
    <property type="match status" value="1"/>
</dbReference>
<dbReference type="Pfam" id="PF00625">
    <property type="entry name" value="Guanylate_kin"/>
    <property type="match status" value="1"/>
</dbReference>
<dbReference type="SMART" id="SM00072">
    <property type="entry name" value="GuKc"/>
    <property type="match status" value="1"/>
</dbReference>
<dbReference type="SUPFAM" id="SSF52540">
    <property type="entry name" value="P-loop containing nucleoside triphosphate hydrolases"/>
    <property type="match status" value="1"/>
</dbReference>
<dbReference type="PROSITE" id="PS00856">
    <property type="entry name" value="GUANYLATE_KINASE_1"/>
    <property type="match status" value="1"/>
</dbReference>
<dbReference type="PROSITE" id="PS50052">
    <property type="entry name" value="GUANYLATE_KINASE_2"/>
    <property type="match status" value="1"/>
</dbReference>
<protein>
    <recommendedName>
        <fullName evidence="1">Guanylate kinase</fullName>
        <ecNumber evidence="1">2.7.4.8</ecNumber>
    </recommendedName>
    <alternativeName>
        <fullName evidence="1">GMP kinase</fullName>
    </alternativeName>
</protein>